<evidence type="ECO:0000255" key="1">
    <source>
        <dbReference type="HAMAP-Rule" id="MF_01365"/>
    </source>
</evidence>
<evidence type="ECO:0000305" key="2"/>
<accession>Q2RQX5</accession>
<name>RL6_RHORT</name>
<proteinExistence type="inferred from homology"/>
<gene>
    <name evidence="1" type="primary">rplF</name>
    <name type="ordered locus">Rru_A2673</name>
</gene>
<comment type="function">
    <text evidence="1">This protein binds to the 23S rRNA, and is important in its secondary structure. It is located near the subunit interface in the base of the L7/L12 stalk, and near the tRNA binding site of the peptidyltransferase center.</text>
</comment>
<comment type="subunit">
    <text evidence="1">Part of the 50S ribosomal subunit.</text>
</comment>
<comment type="similarity">
    <text evidence="1">Belongs to the universal ribosomal protein uL6 family.</text>
</comment>
<sequence>MSRVGKYPVTVPAGVTITVKDNVVTAKGKLGEMTYTAAGEVETRLEDNLIWVKPLSETKHARQQWGTTRARINNLVRGVSEGFSRKLELVGVGYKAAAQGKVLKLSLGFSHDVDFPIPEDLKITTPAPNQIEISGVDKQRVGQIASEIRSYRSPEPYKGKGVKYAGEQILRKEGKKK</sequence>
<protein>
    <recommendedName>
        <fullName evidence="1">Large ribosomal subunit protein uL6</fullName>
    </recommendedName>
    <alternativeName>
        <fullName evidence="2">50S ribosomal protein L6</fullName>
    </alternativeName>
</protein>
<organism>
    <name type="scientific">Rhodospirillum rubrum (strain ATCC 11170 / ATH 1.1.1 / DSM 467 / LMG 4362 / NCIMB 8255 / S1)</name>
    <dbReference type="NCBI Taxonomy" id="269796"/>
    <lineage>
        <taxon>Bacteria</taxon>
        <taxon>Pseudomonadati</taxon>
        <taxon>Pseudomonadota</taxon>
        <taxon>Alphaproteobacteria</taxon>
        <taxon>Rhodospirillales</taxon>
        <taxon>Rhodospirillaceae</taxon>
        <taxon>Rhodospirillum</taxon>
    </lineage>
</organism>
<feature type="chain" id="PRO_0000260931" description="Large ribosomal subunit protein uL6">
    <location>
        <begin position="1"/>
        <end position="177"/>
    </location>
</feature>
<reference key="1">
    <citation type="journal article" date="2011" name="Stand. Genomic Sci.">
        <title>Complete genome sequence of Rhodospirillum rubrum type strain (S1).</title>
        <authorList>
            <person name="Munk A.C."/>
            <person name="Copeland A."/>
            <person name="Lucas S."/>
            <person name="Lapidus A."/>
            <person name="Del Rio T.G."/>
            <person name="Barry K."/>
            <person name="Detter J.C."/>
            <person name="Hammon N."/>
            <person name="Israni S."/>
            <person name="Pitluck S."/>
            <person name="Brettin T."/>
            <person name="Bruce D."/>
            <person name="Han C."/>
            <person name="Tapia R."/>
            <person name="Gilna P."/>
            <person name="Schmutz J."/>
            <person name="Larimer F."/>
            <person name="Land M."/>
            <person name="Kyrpides N.C."/>
            <person name="Mavromatis K."/>
            <person name="Richardson P."/>
            <person name="Rohde M."/>
            <person name="Goeker M."/>
            <person name="Klenk H.P."/>
            <person name="Zhang Y."/>
            <person name="Roberts G.P."/>
            <person name="Reslewic S."/>
            <person name="Schwartz D.C."/>
        </authorList>
    </citation>
    <scope>NUCLEOTIDE SEQUENCE [LARGE SCALE GENOMIC DNA]</scope>
    <source>
        <strain>ATCC 11170 / ATH 1.1.1 / DSM 467 / LMG 4362 / NCIMB 8255 / S1</strain>
    </source>
</reference>
<dbReference type="EMBL" id="CP000230">
    <property type="protein sequence ID" value="ABC23470.1"/>
    <property type="molecule type" value="Genomic_DNA"/>
</dbReference>
<dbReference type="RefSeq" id="WP_011390423.1">
    <property type="nucleotide sequence ID" value="NC_007643.1"/>
</dbReference>
<dbReference type="RefSeq" id="YP_427757.1">
    <property type="nucleotide sequence ID" value="NC_007643.1"/>
</dbReference>
<dbReference type="SMR" id="Q2RQX5"/>
<dbReference type="STRING" id="269796.Rru_A2673"/>
<dbReference type="EnsemblBacteria" id="ABC23470">
    <property type="protein sequence ID" value="ABC23470"/>
    <property type="gene ID" value="Rru_A2673"/>
</dbReference>
<dbReference type="KEGG" id="rru:Rru_A2673"/>
<dbReference type="PATRIC" id="fig|269796.9.peg.2780"/>
<dbReference type="eggNOG" id="COG0097">
    <property type="taxonomic scope" value="Bacteria"/>
</dbReference>
<dbReference type="HOGENOM" id="CLU_065464_1_2_5"/>
<dbReference type="PhylomeDB" id="Q2RQX5"/>
<dbReference type="Proteomes" id="UP000001929">
    <property type="component" value="Chromosome"/>
</dbReference>
<dbReference type="GO" id="GO:0022625">
    <property type="term" value="C:cytosolic large ribosomal subunit"/>
    <property type="evidence" value="ECO:0007669"/>
    <property type="project" value="TreeGrafter"/>
</dbReference>
<dbReference type="GO" id="GO:0019843">
    <property type="term" value="F:rRNA binding"/>
    <property type="evidence" value="ECO:0007669"/>
    <property type="project" value="UniProtKB-UniRule"/>
</dbReference>
<dbReference type="GO" id="GO:0003735">
    <property type="term" value="F:structural constituent of ribosome"/>
    <property type="evidence" value="ECO:0007669"/>
    <property type="project" value="InterPro"/>
</dbReference>
<dbReference type="GO" id="GO:0002181">
    <property type="term" value="P:cytoplasmic translation"/>
    <property type="evidence" value="ECO:0007669"/>
    <property type="project" value="TreeGrafter"/>
</dbReference>
<dbReference type="FunFam" id="3.90.930.12:FF:000001">
    <property type="entry name" value="50S ribosomal protein L6"/>
    <property type="match status" value="1"/>
</dbReference>
<dbReference type="Gene3D" id="3.90.930.12">
    <property type="entry name" value="Ribosomal protein L6, alpha-beta domain"/>
    <property type="match status" value="2"/>
</dbReference>
<dbReference type="HAMAP" id="MF_01365_B">
    <property type="entry name" value="Ribosomal_uL6_B"/>
    <property type="match status" value="1"/>
</dbReference>
<dbReference type="InterPro" id="IPR000702">
    <property type="entry name" value="Ribosomal_uL6-like"/>
</dbReference>
<dbReference type="InterPro" id="IPR036789">
    <property type="entry name" value="Ribosomal_uL6-like_a/b-dom_sf"/>
</dbReference>
<dbReference type="InterPro" id="IPR020040">
    <property type="entry name" value="Ribosomal_uL6_a/b-dom"/>
</dbReference>
<dbReference type="InterPro" id="IPR019906">
    <property type="entry name" value="Ribosomal_uL6_bac-type"/>
</dbReference>
<dbReference type="InterPro" id="IPR002358">
    <property type="entry name" value="Ribosomal_uL6_CS"/>
</dbReference>
<dbReference type="NCBIfam" id="TIGR03654">
    <property type="entry name" value="L6_bact"/>
    <property type="match status" value="1"/>
</dbReference>
<dbReference type="PANTHER" id="PTHR11655">
    <property type="entry name" value="60S/50S RIBOSOMAL PROTEIN L6/L9"/>
    <property type="match status" value="1"/>
</dbReference>
<dbReference type="PANTHER" id="PTHR11655:SF14">
    <property type="entry name" value="LARGE RIBOSOMAL SUBUNIT PROTEIN UL6M"/>
    <property type="match status" value="1"/>
</dbReference>
<dbReference type="Pfam" id="PF00347">
    <property type="entry name" value="Ribosomal_L6"/>
    <property type="match status" value="2"/>
</dbReference>
<dbReference type="PIRSF" id="PIRSF002162">
    <property type="entry name" value="Ribosomal_L6"/>
    <property type="match status" value="1"/>
</dbReference>
<dbReference type="PRINTS" id="PR00059">
    <property type="entry name" value="RIBOSOMALL6"/>
</dbReference>
<dbReference type="SUPFAM" id="SSF56053">
    <property type="entry name" value="Ribosomal protein L6"/>
    <property type="match status" value="2"/>
</dbReference>
<dbReference type="PROSITE" id="PS00525">
    <property type="entry name" value="RIBOSOMAL_L6_1"/>
    <property type="match status" value="1"/>
</dbReference>
<keyword id="KW-1185">Reference proteome</keyword>
<keyword id="KW-0687">Ribonucleoprotein</keyword>
<keyword id="KW-0689">Ribosomal protein</keyword>
<keyword id="KW-0694">RNA-binding</keyword>
<keyword id="KW-0699">rRNA-binding</keyword>